<gene>
    <name evidence="1" type="primary">HA</name>
</gene>
<evidence type="ECO:0000255" key="1">
    <source>
        <dbReference type="HAMAP-Rule" id="MF_04072"/>
    </source>
</evidence>
<evidence type="ECO:0000305" key="2"/>
<evidence type="ECO:0007829" key="3">
    <source>
        <dbReference type="PDB" id="8F38"/>
    </source>
</evidence>
<organismHost>
    <name type="scientific">Aves</name>
    <dbReference type="NCBI Taxonomy" id="8782"/>
</organismHost>
<organismHost>
    <name type="scientific">Homo sapiens</name>
    <name type="common">Human</name>
    <dbReference type="NCBI Taxonomy" id="9606"/>
</organismHost>
<organismHost>
    <name type="scientific">Sus scrofa</name>
    <name type="common">Pig</name>
    <dbReference type="NCBI Taxonomy" id="9823"/>
</organismHost>
<dbReference type="EMBL" id="CY009204">
    <property type="protein sequence ID" value="ABD61518.1"/>
    <property type="molecule type" value="Genomic_RNA"/>
</dbReference>
<dbReference type="PDB" id="7MFG">
    <property type="method" value="EM"/>
    <property type="resolution" value="3.87 A"/>
    <property type="chains" value="B/D/I=344-519"/>
</dbReference>
<dbReference type="PDB" id="8D21">
    <property type="method" value="EM"/>
    <property type="resolution" value="3.96 A"/>
    <property type="chains" value="B/C/G=344-519"/>
</dbReference>
<dbReference type="PDB" id="8F38">
    <property type="method" value="EM"/>
    <property type="resolution" value="2.64 A"/>
    <property type="chains" value="A/B/C=1-565"/>
</dbReference>
<dbReference type="PDB" id="8UR5">
    <property type="method" value="EM"/>
    <property type="resolution" value="3.70 A"/>
    <property type="chains" value="A/B/C=63-280"/>
</dbReference>
<dbReference type="PDB" id="8UR7">
    <property type="method" value="EM"/>
    <property type="resolution" value="3.90 A"/>
    <property type="chains" value="A/B/C=63-280"/>
</dbReference>
<dbReference type="PDBsum" id="7MFG"/>
<dbReference type="PDBsum" id="8D21"/>
<dbReference type="PDBsum" id="8F38"/>
<dbReference type="PDBsum" id="8UR5"/>
<dbReference type="PDBsum" id="8UR7"/>
<dbReference type="EMDB" id="EMD-23816"/>
<dbReference type="EMDB" id="EMD-25039"/>
<dbReference type="EMDB" id="EMD-25040"/>
<dbReference type="EMDB" id="EMD-27139"/>
<dbReference type="EMDB" id="EMD-28833"/>
<dbReference type="EMDB" id="EMD-42482"/>
<dbReference type="EMDB" id="EMD-42486"/>
<dbReference type="SMR" id="Q289M7"/>
<dbReference type="GlyCosmos" id="Q289M7">
    <property type="glycosylation" value="9 sites, No reported glycans"/>
</dbReference>
<dbReference type="Proteomes" id="UP001366552">
    <property type="component" value="Genome"/>
</dbReference>
<dbReference type="GO" id="GO:0020002">
    <property type="term" value="C:host cell plasma membrane"/>
    <property type="evidence" value="ECO:0007669"/>
    <property type="project" value="UniProtKB-SubCell"/>
</dbReference>
<dbReference type="GO" id="GO:0016020">
    <property type="term" value="C:membrane"/>
    <property type="evidence" value="ECO:0007669"/>
    <property type="project" value="UniProtKB-UniRule"/>
</dbReference>
<dbReference type="GO" id="GO:0019031">
    <property type="term" value="C:viral envelope"/>
    <property type="evidence" value="ECO:0007669"/>
    <property type="project" value="UniProtKB-UniRule"/>
</dbReference>
<dbReference type="GO" id="GO:0055036">
    <property type="term" value="C:virion membrane"/>
    <property type="evidence" value="ECO:0007669"/>
    <property type="project" value="UniProtKB-SubCell"/>
</dbReference>
<dbReference type="GO" id="GO:0046789">
    <property type="term" value="F:host cell surface receptor binding"/>
    <property type="evidence" value="ECO:0007669"/>
    <property type="project" value="UniProtKB-UniRule"/>
</dbReference>
<dbReference type="GO" id="GO:0075512">
    <property type="term" value="P:clathrin-dependent endocytosis of virus by host cell"/>
    <property type="evidence" value="ECO:0007669"/>
    <property type="project" value="UniProtKB-UniRule"/>
</dbReference>
<dbReference type="GO" id="GO:0039654">
    <property type="term" value="P:fusion of virus membrane with host endosome membrane"/>
    <property type="evidence" value="ECO:0007669"/>
    <property type="project" value="UniProtKB-UniRule"/>
</dbReference>
<dbReference type="GO" id="GO:0019064">
    <property type="term" value="P:fusion of virus membrane with host plasma membrane"/>
    <property type="evidence" value="ECO:0007669"/>
    <property type="project" value="InterPro"/>
</dbReference>
<dbReference type="GO" id="GO:0046761">
    <property type="term" value="P:viral budding from plasma membrane"/>
    <property type="evidence" value="ECO:0007669"/>
    <property type="project" value="UniProtKB-UniRule"/>
</dbReference>
<dbReference type="GO" id="GO:0019062">
    <property type="term" value="P:virion attachment to host cell"/>
    <property type="evidence" value="ECO:0007669"/>
    <property type="project" value="UniProtKB-KW"/>
</dbReference>
<dbReference type="FunFam" id="3.90.20.10:FF:000002">
    <property type="entry name" value="Hemagglutinin"/>
    <property type="match status" value="1"/>
</dbReference>
<dbReference type="Gene3D" id="3.90.20.10">
    <property type="match status" value="1"/>
</dbReference>
<dbReference type="Gene3D" id="3.90.209.20">
    <property type="match status" value="1"/>
</dbReference>
<dbReference type="HAMAP" id="MF_04072">
    <property type="entry name" value="INFV_HEMA"/>
    <property type="match status" value="1"/>
</dbReference>
<dbReference type="InterPro" id="IPR008980">
    <property type="entry name" value="Capsid_hemagglutn"/>
</dbReference>
<dbReference type="InterPro" id="IPR013828">
    <property type="entry name" value="Hemagglutn_HA1_a/b_dom_sf"/>
</dbReference>
<dbReference type="InterPro" id="IPR000149">
    <property type="entry name" value="Hemagglutn_influenz_A"/>
</dbReference>
<dbReference type="InterPro" id="IPR001364">
    <property type="entry name" value="Hemagglutn_influenz_A/B"/>
</dbReference>
<dbReference type="Pfam" id="PF00509">
    <property type="entry name" value="Hemagglutinin"/>
    <property type="match status" value="1"/>
</dbReference>
<dbReference type="PRINTS" id="PR00330">
    <property type="entry name" value="HEMAGGLUTN1"/>
</dbReference>
<dbReference type="PRINTS" id="PR00329">
    <property type="entry name" value="HEMAGGLUTN12"/>
</dbReference>
<dbReference type="SUPFAM" id="SSF58064">
    <property type="entry name" value="Influenza hemagglutinin (stalk)"/>
    <property type="match status" value="1"/>
</dbReference>
<dbReference type="SUPFAM" id="SSF49818">
    <property type="entry name" value="Viral protein domain"/>
    <property type="match status" value="1"/>
</dbReference>
<name>HEMA_I00A1</name>
<reference key="1">
    <citation type="submission" date="2006-03" db="EMBL/GenBank/DDBJ databases">
        <title>The NIAID influenza genome sequencing project.</title>
        <authorList>
            <person name="Ghedin E."/>
            <person name="Spiro D."/>
            <person name="Sengamalay N."/>
            <person name="Zaborsky J."/>
            <person name="Feldblyum T."/>
            <person name="Subbu V."/>
            <person name="Sparenborg J."/>
            <person name="Groveman L."/>
            <person name="Halpin R."/>
            <person name="Shumway M."/>
            <person name="Sitz J."/>
            <person name="Katzel D."/>
            <person name="Koo H."/>
            <person name="Salzberg S.L."/>
            <person name="Jennings L."/>
            <person name="Smit M."/>
            <person name="Wells V."/>
            <person name="Bao Y."/>
            <person name="Bolotov P."/>
            <person name="Dernovoy D."/>
            <person name="Kiryutin B."/>
            <person name="Lipman D.J."/>
            <person name="Tatusova T."/>
        </authorList>
    </citation>
    <scope>NUCLEOTIDE SEQUENCE [GENOMIC RNA]</scope>
</reference>
<reference key="2">
    <citation type="submission" date="2006-03" db="EMBL/GenBank/DDBJ databases">
        <authorList>
            <consortium name="The NIAID Influenza Genome Sequencing Consortium"/>
        </authorList>
    </citation>
    <scope>NUCLEOTIDE SEQUENCE [GENOMIC RNA]</scope>
</reference>
<protein>
    <recommendedName>
        <fullName evidence="1">Hemagglutinin</fullName>
    </recommendedName>
    <component>
        <recommendedName>
            <fullName evidence="1">Hemagglutinin HA1 chain</fullName>
        </recommendedName>
    </component>
    <component>
        <recommendedName>
            <fullName evidence="1">Hemagglutinin HA2 chain</fullName>
        </recommendedName>
    </component>
</protein>
<keyword id="KW-0002">3D-structure</keyword>
<keyword id="KW-1167">Clathrin- and caveolin-independent endocytosis of virus by host</keyword>
<keyword id="KW-1165">Clathrin-mediated endocytosis of virus by host</keyword>
<keyword id="KW-1015">Disulfide bond</keyword>
<keyword id="KW-1170">Fusion of virus membrane with host endosomal membrane</keyword>
<keyword id="KW-1168">Fusion of virus membrane with host membrane</keyword>
<keyword id="KW-0325">Glycoprotein</keyword>
<keyword id="KW-0348">Hemagglutinin</keyword>
<keyword id="KW-1032">Host cell membrane</keyword>
<keyword id="KW-1043">Host membrane</keyword>
<keyword id="KW-0945">Host-virus interaction</keyword>
<keyword id="KW-0449">Lipoprotein</keyword>
<keyword id="KW-0472">Membrane</keyword>
<keyword id="KW-0564">Palmitate</keyword>
<keyword id="KW-0732">Signal</keyword>
<keyword id="KW-0812">Transmembrane</keyword>
<keyword id="KW-1133">Transmembrane helix</keyword>
<keyword id="KW-1161">Viral attachment to host cell</keyword>
<keyword id="KW-0261">Viral envelope protein</keyword>
<keyword id="KW-1162">Viral penetration into host cytoplasm</keyword>
<keyword id="KW-0946">Virion</keyword>
<keyword id="KW-1164">Virus endocytosis by host</keyword>
<keyword id="KW-1160">Virus entry into host cell</keyword>
<organism>
    <name type="scientific">Influenza A virus (strain A/New Zealand:South Canterbury/35/2000 H1N1)</name>
    <dbReference type="NCBI Taxonomy" id="363066"/>
    <lineage>
        <taxon>Viruses</taxon>
        <taxon>Riboviria</taxon>
        <taxon>Orthornavirae</taxon>
        <taxon>Negarnaviricota</taxon>
        <taxon>Polyploviricotina</taxon>
        <taxon>Insthoviricetes</taxon>
        <taxon>Articulavirales</taxon>
        <taxon>Orthomyxoviridae</taxon>
        <taxon>Alphainfluenzavirus</taxon>
        <taxon>Alphainfluenzavirus influenzae</taxon>
        <taxon>Influenza A virus</taxon>
    </lineage>
</organism>
<sequence length="565" mass="63239">MKVKLLVLLCTFTATYADTICIGYHANNSTDTVDTVLEKNVTVTHSVNLLEDSHNGKLCLLKGIAPLQLGNCSVAGWILGNPECELLISKESWSYIVETPNPENGTCYPGYFADYEELREQLSSVSSFERFEIFPKESSWPNHTVTGVSASCSHNGKSSFYRNLLWLTGKNGLYPNLSKSYANNKEKEVLVLWGVHHPPNIGDQRALYHTENAYVSVVSSHYSRRFTPEIAKRPKVRNQEGRINYYWTLLEPGDTIIFEANGNLIAPRYAFALSRGFGSGIITSNAPMDECDAKCQTPQGAINSSLPFQNVHPVTIGECPKYVRSAKLRMVTGLRNIPSIQSRGLFGAIAGFIEGGWTGMVDGWYGYHHQNEQGSGYAADQKSTQNAINGITNKVNSVIEKMNTQFTAVGKEFNKLERRMENLNKKVDDGFLDIWTYNAELLVLLENERTLDFHDSNVKNLYEKVKSQLKNNAKEIGNGCFEFYHKCNNECMESVKNGTYDYPKYSEESKLNREKIDGVKLESMGVYQILAIYSTVASSLVLLVSLGAISFWMCSNGSLQCRICI</sequence>
<accession>Q289M7</accession>
<feature type="signal peptide" evidence="1">
    <location>
        <begin position="1"/>
        <end position="17"/>
    </location>
</feature>
<feature type="chain" id="PRO_0000440369" description="Hemagglutinin" evidence="1">
    <location>
        <begin position="18"/>
        <end position="565"/>
    </location>
</feature>
<feature type="chain" id="PRO_0000372867" description="Hemagglutinin HA1 chain" evidence="1">
    <location>
        <begin position="18"/>
        <end position="342"/>
    </location>
</feature>
<feature type="chain" id="PRO_0000372868" description="Hemagglutinin HA2 chain" evidence="1">
    <location>
        <begin position="344"/>
        <end position="565"/>
    </location>
</feature>
<feature type="topological domain" description="Extracellular" evidence="1">
    <location>
        <begin position="18"/>
        <end position="528"/>
    </location>
</feature>
<feature type="transmembrane region" description="Helical" evidence="1">
    <location>
        <begin position="529"/>
        <end position="549"/>
    </location>
</feature>
<feature type="topological domain" description="Cytoplasmic" evidence="1">
    <location>
        <begin position="550"/>
        <end position="565"/>
    </location>
</feature>
<feature type="site" description="Cleavage; by host" evidence="1">
    <location>
        <begin position="343"/>
        <end position="344"/>
    </location>
</feature>
<feature type="lipid moiety-binding region" description="S-palmitoyl cysteine; by host" evidence="1">
    <location>
        <position position="554"/>
    </location>
</feature>
<feature type="lipid moiety-binding region" description="S-palmitoyl cysteine; by host" evidence="1">
    <location>
        <position position="561"/>
    </location>
</feature>
<feature type="lipid moiety-binding region" description="S-palmitoyl cysteine; by host" evidence="1">
    <location>
        <position position="564"/>
    </location>
</feature>
<feature type="glycosylation site" description="N-linked (GlcNAc...) asparagine; by host" evidence="1">
    <location>
        <position position="27"/>
    </location>
</feature>
<feature type="glycosylation site" description="N-linked (GlcNAc...) asparagine; by host" evidence="1">
    <location>
        <position position="28"/>
    </location>
</feature>
<feature type="glycosylation site" description="N-linked (GlcNAc...) asparagine; by host" evidence="1">
    <location>
        <position position="40"/>
    </location>
</feature>
<feature type="glycosylation site" description="N-linked (GlcNAc...) asparagine; by host" evidence="1">
    <location>
        <position position="71"/>
    </location>
</feature>
<feature type="glycosylation site" description="N-linked (GlcNAc...) asparagine; by host" evidence="1">
    <location>
        <position position="104"/>
    </location>
</feature>
<feature type="glycosylation site" description="N-linked (GlcNAc...) asparagine; by host" evidence="1">
    <location>
        <position position="142"/>
    </location>
</feature>
<feature type="glycosylation site" description="N-linked (GlcNAc...) asparagine; by host" evidence="1">
    <location>
        <position position="176"/>
    </location>
</feature>
<feature type="glycosylation site" description="N-linked (GlcNAc...) asparagine; by host" evidence="1">
    <location>
        <position position="303"/>
    </location>
</feature>
<feature type="glycosylation site" description="N-linked (GlcNAc...) asparagine; by host" evidence="1">
    <location>
        <position position="497"/>
    </location>
</feature>
<feature type="disulfide bond" description="Interchain (between HA1 and HA2 chains)" evidence="1">
    <location>
        <begin position="21"/>
        <end position="480"/>
    </location>
</feature>
<feature type="disulfide bond" evidence="1">
    <location>
        <begin position="59"/>
        <end position="291"/>
    </location>
</feature>
<feature type="disulfide bond" evidence="1">
    <location>
        <begin position="72"/>
        <end position="84"/>
    </location>
</feature>
<feature type="disulfide bond" evidence="1">
    <location>
        <begin position="107"/>
        <end position="152"/>
    </location>
</feature>
<feature type="disulfide bond" evidence="1">
    <location>
        <begin position="295"/>
        <end position="319"/>
    </location>
</feature>
<feature type="disulfide bond" evidence="1">
    <location>
        <begin position="487"/>
        <end position="491"/>
    </location>
</feature>
<feature type="strand" evidence="3">
    <location>
        <begin position="19"/>
        <end position="25"/>
    </location>
</feature>
<feature type="strand" evidence="3">
    <location>
        <begin position="40"/>
        <end position="44"/>
    </location>
</feature>
<feature type="strand" evidence="3">
    <location>
        <begin position="46"/>
        <end position="48"/>
    </location>
</feature>
<feature type="strand" evidence="3">
    <location>
        <begin position="57"/>
        <end position="61"/>
    </location>
</feature>
<feature type="helix" evidence="3">
    <location>
        <begin position="74"/>
        <end position="79"/>
    </location>
</feature>
<feature type="helix" evidence="3">
    <location>
        <begin position="85"/>
        <end position="87"/>
    </location>
</feature>
<feature type="strand" evidence="3">
    <location>
        <begin position="96"/>
        <end position="98"/>
    </location>
</feature>
<feature type="helix" evidence="3">
    <location>
        <begin position="115"/>
        <end position="122"/>
    </location>
</feature>
<feature type="strand" evidence="3">
    <location>
        <begin position="125"/>
        <end position="134"/>
    </location>
</feature>
<feature type="turn" evidence="3">
    <location>
        <begin position="136"/>
        <end position="138"/>
    </location>
</feature>
<feature type="strand" evidence="3">
    <location>
        <begin position="149"/>
        <end position="154"/>
    </location>
</feature>
<feature type="strand" evidence="3">
    <location>
        <begin position="157"/>
        <end position="159"/>
    </location>
</feature>
<feature type="strand" evidence="3">
    <location>
        <begin position="162"/>
        <end position="166"/>
    </location>
</feature>
<feature type="strand" evidence="3">
    <location>
        <begin position="168"/>
        <end position="170"/>
    </location>
</feature>
<feature type="strand" evidence="3">
    <location>
        <begin position="177"/>
        <end position="182"/>
    </location>
</feature>
<feature type="strand" evidence="3">
    <location>
        <begin position="185"/>
        <end position="187"/>
    </location>
</feature>
<feature type="strand" evidence="3">
    <location>
        <begin position="189"/>
        <end position="197"/>
    </location>
</feature>
<feature type="helix" evidence="3">
    <location>
        <begin position="201"/>
        <end position="208"/>
    </location>
</feature>
<feature type="strand" evidence="3">
    <location>
        <begin position="215"/>
        <end position="218"/>
    </location>
</feature>
<feature type="strand" evidence="3">
    <location>
        <begin position="223"/>
        <end position="226"/>
    </location>
</feature>
<feature type="strand" evidence="3">
    <location>
        <begin position="236"/>
        <end position="238"/>
    </location>
</feature>
<feature type="strand" evidence="3">
    <location>
        <begin position="242"/>
        <end position="250"/>
    </location>
</feature>
<feature type="strand" evidence="3">
    <location>
        <begin position="255"/>
        <end position="262"/>
    </location>
</feature>
<feature type="strand" evidence="3">
    <location>
        <begin position="264"/>
        <end position="267"/>
    </location>
</feature>
<feature type="strand" evidence="3">
    <location>
        <begin position="269"/>
        <end position="275"/>
    </location>
</feature>
<feature type="strand" evidence="3">
    <location>
        <begin position="281"/>
        <end position="283"/>
    </location>
</feature>
<feature type="strand" evidence="3">
    <location>
        <begin position="288"/>
        <end position="296"/>
    </location>
</feature>
<feature type="strand" evidence="3">
    <location>
        <begin position="307"/>
        <end position="309"/>
    </location>
</feature>
<feature type="strand" evidence="3">
    <location>
        <begin position="315"/>
        <end position="319"/>
    </location>
</feature>
<feature type="strand" evidence="3">
    <location>
        <begin position="329"/>
        <end position="331"/>
    </location>
</feature>
<feature type="turn" evidence="3">
    <location>
        <begin position="352"/>
        <end position="354"/>
    </location>
</feature>
<feature type="strand" evidence="3">
    <location>
        <begin position="356"/>
        <end position="359"/>
    </location>
</feature>
<feature type="strand" evidence="3">
    <location>
        <begin position="364"/>
        <end position="371"/>
    </location>
</feature>
<feature type="strand" evidence="3">
    <location>
        <begin position="374"/>
        <end position="379"/>
    </location>
</feature>
<feature type="helix" evidence="3">
    <location>
        <begin position="381"/>
        <end position="401"/>
    </location>
</feature>
<feature type="helix" evidence="3">
    <location>
        <begin position="418"/>
        <end position="469"/>
    </location>
</feature>
<feature type="helix" evidence="3">
    <location>
        <begin position="470"/>
        <end position="472"/>
    </location>
</feature>
<feature type="strand" evidence="3">
    <location>
        <begin position="473"/>
        <end position="475"/>
    </location>
</feature>
<feature type="strand" evidence="3">
    <location>
        <begin position="477"/>
        <end position="485"/>
    </location>
</feature>
<feature type="helix" evidence="3">
    <location>
        <begin position="489"/>
        <end position="495"/>
    </location>
</feature>
<feature type="helix" evidence="3">
    <location>
        <begin position="502"/>
        <end position="505"/>
    </location>
</feature>
<comment type="function">
    <text evidence="1">Binds to sialic acid-containing receptors on the cell surface, bringing about the attachment of the virus particle to the cell. This attachment induces virion internalization either through clathrin-dependent endocytosis or through clathrin- and caveolin-independent pathway. Plays a major role in the determination of host range restriction and virulence. Class I viral fusion protein. Responsible for penetration of the virus into the cell cytoplasm by mediating the fusion of the membrane of the endocytosed virus particle with the endosomal membrane. Low pH in endosomes induces an irreversible conformational change in HA2, releasing the fusion hydrophobic peptide. Several trimers are required to form a competent fusion pore.</text>
</comment>
<comment type="subunit">
    <text evidence="1">Homotrimer of disulfide-linked HA1-HA2. Interacts with human CACNA1C.</text>
</comment>
<comment type="subcellular location">
    <subcellularLocation>
        <location evidence="1">Virion membrane</location>
        <topology evidence="1">Single-pass type I membrane protein</topology>
    </subcellularLocation>
    <subcellularLocation>
        <location evidence="1">Host apical cell membrane</location>
        <topology evidence="1">Single-pass type I membrane protein</topology>
    </subcellularLocation>
    <text evidence="1">Targeted to the apical plasma membrane in epithelial polarized cells through a signal present in the transmembrane domain. Associated with glycosphingolipid- and cholesterol-enriched detergent-resistant lipid rafts.</text>
</comment>
<comment type="PTM">
    <text evidence="1">Palmitoylated.</text>
</comment>
<comment type="PTM">
    <text evidence="1">In natural infection, inactive HA is matured into HA1 and HA2 outside the cell by one or more trypsin-like, arginine-specific endoprotease secreted by the bronchial epithelial cells. One identified protease that may be involved in this process is secreted in lungs by club cells.</text>
</comment>
<comment type="miscellaneous">
    <text>Major glycoprotein, comprises over 80% of the envelope proteins present in virus particle.</text>
</comment>
<comment type="miscellaneous">
    <text>The extent of infection into host organism is determined by HA. Influenza viruses bud from the apical surface of polarized epithelial cells (e.g. bronchial epithelial cells) into lumen of lungs and are therefore usually pneumotropic. The reason is that HA is cleaved by tryptase clara which is restricted to lungs. However, HAs of H5 and H7 pantropic avian viruses subtypes can be cleaved by furin and subtilisin-type enzymes, allowing the virus to grow in other organs than lungs.</text>
</comment>
<comment type="miscellaneous">
    <text evidence="2">The influenza A genome consist of 8 RNA segments. Genetic variation of hemagglutinin and/or neuraminidase genes results in the emergence of new influenza strains. The mechanism of variation can be the result of point mutations or the result of genetic reassortment between segments of two different strains.</text>
</comment>
<comment type="similarity">
    <text evidence="1">Belongs to the influenza viruses hemagglutinin family.</text>
</comment>
<proteinExistence type="evidence at protein level"/>